<accession>Q914G0</accession>
<protein>
    <recommendedName>
        <fullName>Uncharacterized protein 72</fullName>
    </recommendedName>
</protein>
<organism>
    <name type="scientific">Sulfolobus islandicus filamentous virus (isolate Iceland/Hveragerdi)</name>
    <name type="common">SIFV</name>
    <dbReference type="NCBI Taxonomy" id="654908"/>
    <lineage>
        <taxon>Viruses</taxon>
        <taxon>Adnaviria</taxon>
        <taxon>Zilligvirae</taxon>
        <taxon>Taleaviricota</taxon>
        <taxon>Tokiviricetes</taxon>
        <taxon>Ligamenvirales</taxon>
        <taxon>Lipothrixviridae</taxon>
        <taxon>Betalipothrixvirus</taxon>
        <taxon>Sulfolobus islandicus filamentous virus</taxon>
    </lineage>
</organism>
<gene>
    <name type="primary">SIFV0072</name>
</gene>
<name>Y072_SIFVH</name>
<feature type="chain" id="PRO_0000385391" description="Uncharacterized protein 72">
    <location>
        <begin position="1"/>
        <end position="98"/>
    </location>
</feature>
<proteinExistence type="predicted"/>
<organismHost>
    <name type="scientific">Saccharolobus islandicus</name>
    <name type="common">Sulfolobus islandicus</name>
    <dbReference type="NCBI Taxonomy" id="43080"/>
</organismHost>
<keyword id="KW-1185">Reference proteome</keyword>
<dbReference type="EMBL" id="AF440571">
    <property type="protein sequence ID" value="AAL27781.1"/>
    <property type="molecule type" value="Genomic_DNA"/>
</dbReference>
<dbReference type="RefSeq" id="NP_445735.1">
    <property type="nucleotide sequence ID" value="NC_003214.2"/>
</dbReference>
<dbReference type="GeneID" id="922284"/>
<dbReference type="KEGG" id="vg:922284"/>
<dbReference type="Proteomes" id="UP000007017">
    <property type="component" value="Segment"/>
</dbReference>
<reference key="1">
    <citation type="journal article" date="2000" name="Virology">
        <title>A novel lipothrixvirus, SIFV, of the extremely thermophilic crenarchaeon Sulfolobus.</title>
        <authorList>
            <person name="Arnold H.P."/>
            <person name="Zillig W."/>
            <person name="Ziese U."/>
            <person name="Holz I."/>
            <person name="Crosby M."/>
            <person name="Utterback T."/>
            <person name="Weidmann J.F."/>
            <person name="Umayam L.A."/>
            <person name="Teffera K."/>
            <person name="Kristjanson J.K."/>
            <person name="Klenk H.P."/>
            <person name="Nelson K.E."/>
            <person name="Fraser C.M."/>
        </authorList>
    </citation>
    <scope>NUCLEOTIDE SEQUENCE [GENOMIC DNA]</scope>
</reference>
<sequence>MRLFSFKGRRKKKSLFVQSEAEIPIKIMVAIGKRHAVGIAELGDQSATVEKTFLPFFKPPEPEEIAKMLLSKLGIPENEWEEILKNKTELQTNETFWR</sequence>